<evidence type="ECO:0000255" key="1">
    <source>
        <dbReference type="HAMAP-Rule" id="MF_00046"/>
    </source>
</evidence>
<accession>Q7VUQ4</accession>
<organism>
    <name type="scientific">Bordetella pertussis (strain Tohama I / ATCC BAA-589 / NCTC 13251)</name>
    <dbReference type="NCBI Taxonomy" id="257313"/>
    <lineage>
        <taxon>Bacteria</taxon>
        <taxon>Pseudomonadati</taxon>
        <taxon>Pseudomonadota</taxon>
        <taxon>Betaproteobacteria</taxon>
        <taxon>Burkholderiales</taxon>
        <taxon>Alcaligenaceae</taxon>
        <taxon>Bordetella</taxon>
    </lineage>
</organism>
<name>MURC_BORPE</name>
<comment type="function">
    <text evidence="1">Cell wall formation.</text>
</comment>
<comment type="catalytic activity">
    <reaction evidence="1">
        <text>UDP-N-acetyl-alpha-D-muramate + L-alanine + ATP = UDP-N-acetyl-alpha-D-muramoyl-L-alanine + ADP + phosphate + H(+)</text>
        <dbReference type="Rhea" id="RHEA:23372"/>
        <dbReference type="ChEBI" id="CHEBI:15378"/>
        <dbReference type="ChEBI" id="CHEBI:30616"/>
        <dbReference type="ChEBI" id="CHEBI:43474"/>
        <dbReference type="ChEBI" id="CHEBI:57972"/>
        <dbReference type="ChEBI" id="CHEBI:70757"/>
        <dbReference type="ChEBI" id="CHEBI:83898"/>
        <dbReference type="ChEBI" id="CHEBI:456216"/>
        <dbReference type="EC" id="6.3.2.8"/>
    </reaction>
</comment>
<comment type="pathway">
    <text evidence="1">Cell wall biogenesis; peptidoglycan biosynthesis.</text>
</comment>
<comment type="subcellular location">
    <subcellularLocation>
        <location evidence="1">Cytoplasm</location>
    </subcellularLocation>
</comment>
<comment type="similarity">
    <text evidence="1">Belongs to the MurCDEF family.</text>
</comment>
<gene>
    <name evidence="1" type="primary">murC</name>
    <name type="ordered locus">BP3022</name>
</gene>
<feature type="chain" id="PRO_0000182064" description="UDP-N-acetylmuramate--L-alanine ligase">
    <location>
        <begin position="1"/>
        <end position="468"/>
    </location>
</feature>
<feature type="binding site" evidence="1">
    <location>
        <begin position="112"/>
        <end position="118"/>
    </location>
    <ligand>
        <name>ATP</name>
        <dbReference type="ChEBI" id="CHEBI:30616"/>
    </ligand>
</feature>
<dbReference type="EC" id="6.3.2.8" evidence="1"/>
<dbReference type="EMBL" id="BX640420">
    <property type="protein sequence ID" value="CAE43293.1"/>
    <property type="molecule type" value="Genomic_DNA"/>
</dbReference>
<dbReference type="RefSeq" id="NP_881597.1">
    <property type="nucleotide sequence ID" value="NC_002929.2"/>
</dbReference>
<dbReference type="RefSeq" id="WP_010931256.1">
    <property type="nucleotide sequence ID" value="NZ_CP039022.1"/>
</dbReference>
<dbReference type="SMR" id="Q7VUQ4"/>
<dbReference type="STRING" id="257313.BP3022"/>
<dbReference type="PaxDb" id="257313-BP3022"/>
<dbReference type="GeneID" id="69602945"/>
<dbReference type="KEGG" id="bpe:BP3022"/>
<dbReference type="PATRIC" id="fig|257313.5.peg.3268"/>
<dbReference type="eggNOG" id="COG0773">
    <property type="taxonomic scope" value="Bacteria"/>
</dbReference>
<dbReference type="HOGENOM" id="CLU_028104_2_2_4"/>
<dbReference type="UniPathway" id="UPA00219"/>
<dbReference type="Proteomes" id="UP000002676">
    <property type="component" value="Chromosome"/>
</dbReference>
<dbReference type="GO" id="GO:0005737">
    <property type="term" value="C:cytoplasm"/>
    <property type="evidence" value="ECO:0007669"/>
    <property type="project" value="UniProtKB-SubCell"/>
</dbReference>
<dbReference type="GO" id="GO:0005524">
    <property type="term" value="F:ATP binding"/>
    <property type="evidence" value="ECO:0007669"/>
    <property type="project" value="UniProtKB-UniRule"/>
</dbReference>
<dbReference type="GO" id="GO:0008763">
    <property type="term" value="F:UDP-N-acetylmuramate-L-alanine ligase activity"/>
    <property type="evidence" value="ECO:0007669"/>
    <property type="project" value="UniProtKB-UniRule"/>
</dbReference>
<dbReference type="GO" id="GO:0051301">
    <property type="term" value="P:cell division"/>
    <property type="evidence" value="ECO:0007669"/>
    <property type="project" value="UniProtKB-KW"/>
</dbReference>
<dbReference type="GO" id="GO:0071555">
    <property type="term" value="P:cell wall organization"/>
    <property type="evidence" value="ECO:0007669"/>
    <property type="project" value="UniProtKB-KW"/>
</dbReference>
<dbReference type="GO" id="GO:0009252">
    <property type="term" value="P:peptidoglycan biosynthetic process"/>
    <property type="evidence" value="ECO:0007669"/>
    <property type="project" value="UniProtKB-UniRule"/>
</dbReference>
<dbReference type="GO" id="GO:0008360">
    <property type="term" value="P:regulation of cell shape"/>
    <property type="evidence" value="ECO:0007669"/>
    <property type="project" value="UniProtKB-KW"/>
</dbReference>
<dbReference type="FunFam" id="3.40.1190.10:FF:000001">
    <property type="entry name" value="UDP-N-acetylmuramate--L-alanine ligase"/>
    <property type="match status" value="1"/>
</dbReference>
<dbReference type="Gene3D" id="3.90.190.20">
    <property type="entry name" value="Mur ligase, C-terminal domain"/>
    <property type="match status" value="1"/>
</dbReference>
<dbReference type="Gene3D" id="3.40.1190.10">
    <property type="entry name" value="Mur-like, catalytic domain"/>
    <property type="match status" value="1"/>
</dbReference>
<dbReference type="Gene3D" id="3.40.50.720">
    <property type="entry name" value="NAD(P)-binding Rossmann-like Domain"/>
    <property type="match status" value="1"/>
</dbReference>
<dbReference type="HAMAP" id="MF_00046">
    <property type="entry name" value="MurC"/>
    <property type="match status" value="1"/>
</dbReference>
<dbReference type="InterPro" id="IPR036565">
    <property type="entry name" value="Mur-like_cat_sf"/>
</dbReference>
<dbReference type="InterPro" id="IPR004101">
    <property type="entry name" value="Mur_ligase_C"/>
</dbReference>
<dbReference type="InterPro" id="IPR036615">
    <property type="entry name" value="Mur_ligase_C_dom_sf"/>
</dbReference>
<dbReference type="InterPro" id="IPR013221">
    <property type="entry name" value="Mur_ligase_cen"/>
</dbReference>
<dbReference type="InterPro" id="IPR000713">
    <property type="entry name" value="Mur_ligase_N"/>
</dbReference>
<dbReference type="InterPro" id="IPR050061">
    <property type="entry name" value="MurCDEF_pg_biosynth"/>
</dbReference>
<dbReference type="InterPro" id="IPR005758">
    <property type="entry name" value="UDP-N-AcMur_Ala_ligase_MurC"/>
</dbReference>
<dbReference type="NCBIfam" id="TIGR01082">
    <property type="entry name" value="murC"/>
    <property type="match status" value="1"/>
</dbReference>
<dbReference type="PANTHER" id="PTHR43445:SF3">
    <property type="entry name" value="UDP-N-ACETYLMURAMATE--L-ALANINE LIGASE"/>
    <property type="match status" value="1"/>
</dbReference>
<dbReference type="PANTHER" id="PTHR43445">
    <property type="entry name" value="UDP-N-ACETYLMURAMATE--L-ALANINE LIGASE-RELATED"/>
    <property type="match status" value="1"/>
</dbReference>
<dbReference type="Pfam" id="PF01225">
    <property type="entry name" value="Mur_ligase"/>
    <property type="match status" value="1"/>
</dbReference>
<dbReference type="Pfam" id="PF02875">
    <property type="entry name" value="Mur_ligase_C"/>
    <property type="match status" value="1"/>
</dbReference>
<dbReference type="Pfam" id="PF08245">
    <property type="entry name" value="Mur_ligase_M"/>
    <property type="match status" value="1"/>
</dbReference>
<dbReference type="SUPFAM" id="SSF51984">
    <property type="entry name" value="MurCD N-terminal domain"/>
    <property type="match status" value="1"/>
</dbReference>
<dbReference type="SUPFAM" id="SSF53623">
    <property type="entry name" value="MurD-like peptide ligases, catalytic domain"/>
    <property type="match status" value="1"/>
</dbReference>
<dbReference type="SUPFAM" id="SSF53244">
    <property type="entry name" value="MurD-like peptide ligases, peptide-binding domain"/>
    <property type="match status" value="1"/>
</dbReference>
<protein>
    <recommendedName>
        <fullName evidence="1">UDP-N-acetylmuramate--L-alanine ligase</fullName>
        <ecNumber evidence="1">6.3.2.8</ecNumber>
    </recommendedName>
    <alternativeName>
        <fullName evidence="1">UDP-N-acetylmuramoyl-L-alanine synthetase</fullName>
    </alternativeName>
</protein>
<reference key="1">
    <citation type="journal article" date="2003" name="Nat. Genet.">
        <title>Comparative analysis of the genome sequences of Bordetella pertussis, Bordetella parapertussis and Bordetella bronchiseptica.</title>
        <authorList>
            <person name="Parkhill J."/>
            <person name="Sebaihia M."/>
            <person name="Preston A."/>
            <person name="Murphy L.D."/>
            <person name="Thomson N.R."/>
            <person name="Harris D.E."/>
            <person name="Holden M.T.G."/>
            <person name="Churcher C.M."/>
            <person name="Bentley S.D."/>
            <person name="Mungall K.L."/>
            <person name="Cerdeno-Tarraga A.-M."/>
            <person name="Temple L."/>
            <person name="James K.D."/>
            <person name="Harris B."/>
            <person name="Quail M.A."/>
            <person name="Achtman M."/>
            <person name="Atkin R."/>
            <person name="Baker S."/>
            <person name="Basham D."/>
            <person name="Bason N."/>
            <person name="Cherevach I."/>
            <person name="Chillingworth T."/>
            <person name="Collins M."/>
            <person name="Cronin A."/>
            <person name="Davis P."/>
            <person name="Doggett J."/>
            <person name="Feltwell T."/>
            <person name="Goble A."/>
            <person name="Hamlin N."/>
            <person name="Hauser H."/>
            <person name="Holroyd S."/>
            <person name="Jagels K."/>
            <person name="Leather S."/>
            <person name="Moule S."/>
            <person name="Norberczak H."/>
            <person name="O'Neil S."/>
            <person name="Ormond D."/>
            <person name="Price C."/>
            <person name="Rabbinowitsch E."/>
            <person name="Rutter S."/>
            <person name="Sanders M."/>
            <person name="Saunders D."/>
            <person name="Seeger K."/>
            <person name="Sharp S."/>
            <person name="Simmonds M."/>
            <person name="Skelton J."/>
            <person name="Squares R."/>
            <person name="Squares S."/>
            <person name="Stevens K."/>
            <person name="Unwin L."/>
            <person name="Whitehead S."/>
            <person name="Barrell B.G."/>
            <person name="Maskell D.J."/>
        </authorList>
    </citation>
    <scope>NUCLEOTIDE SEQUENCE [LARGE SCALE GENOMIC DNA]</scope>
    <source>
        <strain>Tohama I / ATCC BAA-589 / NCTC 13251</strain>
    </source>
</reference>
<sequence>MKHRIQHIHFVGVGGSGMSGIAEVLLNLGYTISGSDLNESAVTRRLAELGMRIAIGHDRANVAGAGAIVTSTAVAGDNPEVLAARAARIPVVPRAVMLAELMRLKRGIAVAGTHGKTTTTSLVASVLAAGGLDPTFVIGGRLTSAGANARLGQGEYIVVEADESDASFLNLLPVMAIVTNIDADHMDTYGHDVARLKSAFIEFTQRLPFYGSAILCADDANVREIMPFVSRPITTYGLSPDAQVCAQDVQADGTRMRFTVQRRDRDVVLPALQVELNLPGLHNVRNALAAIAVATELGVDDAAIREALAAFKGVGRRFTQWGDLPVPAAHGGGIFTLVDDYGHHPVEMAATLAAARGAWPQRRIVLAFQPHRYTRTRDCFEDFVRVLGSADGVLLTEVYAAGEAPLVAADGRALSRALRVAGKVEPVFVEDVGELPQAILDFVRDGDVVVVMGAGSISKTPALVGELA</sequence>
<proteinExistence type="inferred from homology"/>
<keyword id="KW-0067">ATP-binding</keyword>
<keyword id="KW-0131">Cell cycle</keyword>
<keyword id="KW-0132">Cell division</keyword>
<keyword id="KW-0133">Cell shape</keyword>
<keyword id="KW-0961">Cell wall biogenesis/degradation</keyword>
<keyword id="KW-0963">Cytoplasm</keyword>
<keyword id="KW-0436">Ligase</keyword>
<keyword id="KW-0547">Nucleotide-binding</keyword>
<keyword id="KW-0573">Peptidoglycan synthesis</keyword>
<keyword id="KW-1185">Reference proteome</keyword>